<proteinExistence type="inferred from homology"/>
<accession>Q3IHZ1</accession>
<gene>
    <name evidence="1" type="primary">mltF</name>
    <name type="ordered locus">PSHAa2331</name>
</gene>
<feature type="signal peptide" evidence="1">
    <location>
        <begin position="1"/>
        <end position="21"/>
    </location>
</feature>
<feature type="chain" id="PRO_0000353960" description="Membrane-bound lytic murein transglycosylase F">
    <location>
        <begin position="22"/>
        <end position="470"/>
    </location>
</feature>
<feature type="region of interest" description="Non-LT domain" evidence="1">
    <location>
        <begin position="22"/>
        <end position="259"/>
    </location>
</feature>
<feature type="region of interest" description="LT domain" evidence="1">
    <location>
        <begin position="260"/>
        <end position="470"/>
    </location>
</feature>
<feature type="active site" evidence="1">
    <location>
        <position position="304"/>
    </location>
</feature>
<keyword id="KW-0998">Cell outer membrane</keyword>
<keyword id="KW-0961">Cell wall biogenesis/degradation</keyword>
<keyword id="KW-0456">Lyase</keyword>
<keyword id="KW-0472">Membrane</keyword>
<keyword id="KW-1185">Reference proteome</keyword>
<keyword id="KW-0732">Signal</keyword>
<sequence length="470" mass="54060">MLKEKLIIIITLVMLLCACDIQEQSTQLAQIKAQNKIRVGTLASASNYYQAVQGEQGFEYELSQAFADYLGVELEIVPFFNLSDMFARLQSGDLDLIASGLTYNKTRAQQYRFGPTYRTISQKLVYKQGIERPRDYDDLTGNLMVIAKSSHSLTLQKVKKSNPELNWSETEEFDEEELLQAVIDGEIDYTLADTHTLSLFRRYHPNLSIGFSITHNDPIAWMLRKSNDDSLYALLVPFFGEAKQNNQLYVLEEKYFGHVRQFNYVNTLAYIEAIKETLPKYQPWFEQYAGTLDWRLLAALSYQESMWNPRAKSPTGVRGIMMLTRNTAKQVGVTNRLEPEQNIRGGAKYLSKLIKRIPDRIPQPDRTWLALAAYNVGWGHVNDARIITKQQGASPDKWADVKKRLPLLIKKRYYRKTRYGYSRGDVAVSYVDNIRRYYDALVWLDENNAIEEKPEAPVVAPKIGDEVEAK</sequence>
<name>MLTF_PSET1</name>
<comment type="function">
    <text evidence="1">Murein-degrading enzyme that degrades murein glycan strands and insoluble, high-molecular weight murein sacculi, with the concomitant formation of a 1,6-anhydromuramoyl product. Lytic transglycosylases (LTs) play an integral role in the metabolism of the peptidoglycan (PG) sacculus. Their lytic action creates space within the PG sacculus to allow for its expansion as well as for the insertion of various structures such as secretion systems and flagella.</text>
</comment>
<comment type="catalytic activity">
    <reaction evidence="1">
        <text>Exolytic cleavage of the (1-&gt;4)-beta-glycosidic linkage between N-acetylmuramic acid (MurNAc) and N-acetylglucosamine (GlcNAc) residues in peptidoglycan, from either the reducing or the non-reducing ends of the peptidoglycan chains, with concomitant formation of a 1,6-anhydrobond in the MurNAc residue.</text>
        <dbReference type="EC" id="4.2.2.n1"/>
    </reaction>
</comment>
<comment type="subcellular location">
    <subcellularLocation>
        <location>Cell outer membrane</location>
        <topology>Peripheral membrane protein</topology>
    </subcellularLocation>
    <text evidence="1">Attached to the inner leaflet of the outer membrane.</text>
</comment>
<comment type="domain">
    <text evidence="1">The N-terminal domain does not have lytic activity and probably modulates enzymatic activity. The C-terminal domain is the catalytic active domain.</text>
</comment>
<comment type="similarity">
    <text evidence="1">In the N-terminal section; belongs to the bacterial solute-binding protein 3 family.</text>
</comment>
<comment type="similarity">
    <text evidence="1">In the C-terminal section; belongs to the transglycosylase Slt family.</text>
</comment>
<reference key="1">
    <citation type="journal article" date="2005" name="Genome Res.">
        <title>Coping with cold: the genome of the versatile marine Antarctica bacterium Pseudoalteromonas haloplanktis TAC125.</title>
        <authorList>
            <person name="Medigue C."/>
            <person name="Krin E."/>
            <person name="Pascal G."/>
            <person name="Barbe V."/>
            <person name="Bernsel A."/>
            <person name="Bertin P.N."/>
            <person name="Cheung F."/>
            <person name="Cruveiller S."/>
            <person name="D'Amico S."/>
            <person name="Duilio A."/>
            <person name="Fang G."/>
            <person name="Feller G."/>
            <person name="Ho C."/>
            <person name="Mangenot S."/>
            <person name="Marino G."/>
            <person name="Nilsson J."/>
            <person name="Parrilli E."/>
            <person name="Rocha E.P.C."/>
            <person name="Rouy Z."/>
            <person name="Sekowska A."/>
            <person name="Tutino M.L."/>
            <person name="Vallenet D."/>
            <person name="von Heijne G."/>
            <person name="Danchin A."/>
        </authorList>
    </citation>
    <scope>NUCLEOTIDE SEQUENCE [LARGE SCALE GENOMIC DNA]</scope>
    <source>
        <strain>TAC 125</strain>
    </source>
</reference>
<organism>
    <name type="scientific">Pseudoalteromonas translucida (strain TAC 125)</name>
    <dbReference type="NCBI Taxonomy" id="326442"/>
    <lineage>
        <taxon>Bacteria</taxon>
        <taxon>Pseudomonadati</taxon>
        <taxon>Pseudomonadota</taxon>
        <taxon>Gammaproteobacteria</taxon>
        <taxon>Alteromonadales</taxon>
        <taxon>Pseudoalteromonadaceae</taxon>
        <taxon>Pseudoalteromonas</taxon>
    </lineage>
</organism>
<protein>
    <recommendedName>
        <fullName evidence="1">Membrane-bound lytic murein transglycosylase F</fullName>
        <ecNumber evidence="1">4.2.2.n1</ecNumber>
    </recommendedName>
    <alternativeName>
        <fullName evidence="1">Murein lyase F</fullName>
    </alternativeName>
</protein>
<evidence type="ECO:0000255" key="1">
    <source>
        <dbReference type="HAMAP-Rule" id="MF_02016"/>
    </source>
</evidence>
<dbReference type="EC" id="4.2.2.n1" evidence="1"/>
<dbReference type="EMBL" id="CR954246">
    <property type="protein sequence ID" value="CAI87387.1"/>
    <property type="molecule type" value="Genomic_DNA"/>
</dbReference>
<dbReference type="SMR" id="Q3IHZ1"/>
<dbReference type="STRING" id="326442.PSHAa2331"/>
<dbReference type="CAZy" id="GH23">
    <property type="family name" value="Glycoside Hydrolase Family 23"/>
</dbReference>
<dbReference type="KEGG" id="pha:PSHAa2331"/>
<dbReference type="PATRIC" id="fig|326442.8.peg.2253"/>
<dbReference type="eggNOG" id="COG4623">
    <property type="taxonomic scope" value="Bacteria"/>
</dbReference>
<dbReference type="HOGENOM" id="CLU_027494_0_1_6"/>
<dbReference type="BioCyc" id="PHAL326442:PSHA_RS11500-MONOMER"/>
<dbReference type="Proteomes" id="UP000006843">
    <property type="component" value="Chromosome I"/>
</dbReference>
<dbReference type="GO" id="GO:0009279">
    <property type="term" value="C:cell outer membrane"/>
    <property type="evidence" value="ECO:0007669"/>
    <property type="project" value="UniProtKB-SubCell"/>
</dbReference>
<dbReference type="GO" id="GO:0008933">
    <property type="term" value="F:peptidoglycan lytic transglycosylase activity"/>
    <property type="evidence" value="ECO:0007669"/>
    <property type="project" value="UniProtKB-UniRule"/>
</dbReference>
<dbReference type="GO" id="GO:0016998">
    <property type="term" value="P:cell wall macromolecule catabolic process"/>
    <property type="evidence" value="ECO:0007669"/>
    <property type="project" value="UniProtKB-UniRule"/>
</dbReference>
<dbReference type="GO" id="GO:0071555">
    <property type="term" value="P:cell wall organization"/>
    <property type="evidence" value="ECO:0007669"/>
    <property type="project" value="UniProtKB-KW"/>
</dbReference>
<dbReference type="GO" id="GO:0009253">
    <property type="term" value="P:peptidoglycan catabolic process"/>
    <property type="evidence" value="ECO:0007669"/>
    <property type="project" value="TreeGrafter"/>
</dbReference>
<dbReference type="CDD" id="cd13403">
    <property type="entry name" value="MLTF-like"/>
    <property type="match status" value="1"/>
</dbReference>
<dbReference type="CDD" id="cd01009">
    <property type="entry name" value="PBP2_YfhD_N"/>
    <property type="match status" value="1"/>
</dbReference>
<dbReference type="Gene3D" id="1.10.530.10">
    <property type="match status" value="1"/>
</dbReference>
<dbReference type="Gene3D" id="3.40.190.10">
    <property type="entry name" value="Periplasmic binding protein-like II"/>
    <property type="match status" value="2"/>
</dbReference>
<dbReference type="HAMAP" id="MF_02016">
    <property type="entry name" value="MltF"/>
    <property type="match status" value="1"/>
</dbReference>
<dbReference type="InterPro" id="IPR023346">
    <property type="entry name" value="Lysozyme-like_dom_sf"/>
</dbReference>
<dbReference type="InterPro" id="IPR023703">
    <property type="entry name" value="MltF"/>
</dbReference>
<dbReference type="InterPro" id="IPR001638">
    <property type="entry name" value="Solute-binding_3/MltF_N"/>
</dbReference>
<dbReference type="InterPro" id="IPR000189">
    <property type="entry name" value="Transglyc_AS"/>
</dbReference>
<dbReference type="InterPro" id="IPR008258">
    <property type="entry name" value="Transglycosylase_SLT_dom_1"/>
</dbReference>
<dbReference type="NCBIfam" id="NF008112">
    <property type="entry name" value="PRK10859.1"/>
    <property type="match status" value="1"/>
</dbReference>
<dbReference type="PANTHER" id="PTHR35936">
    <property type="entry name" value="MEMBRANE-BOUND LYTIC MUREIN TRANSGLYCOSYLASE F"/>
    <property type="match status" value="1"/>
</dbReference>
<dbReference type="PANTHER" id="PTHR35936:SF32">
    <property type="entry name" value="MEMBRANE-BOUND LYTIC MUREIN TRANSGLYCOSYLASE F"/>
    <property type="match status" value="1"/>
</dbReference>
<dbReference type="Pfam" id="PF00497">
    <property type="entry name" value="SBP_bac_3"/>
    <property type="match status" value="1"/>
</dbReference>
<dbReference type="Pfam" id="PF01464">
    <property type="entry name" value="SLT"/>
    <property type="match status" value="1"/>
</dbReference>
<dbReference type="SMART" id="SM00062">
    <property type="entry name" value="PBPb"/>
    <property type="match status" value="1"/>
</dbReference>
<dbReference type="SUPFAM" id="SSF53955">
    <property type="entry name" value="Lysozyme-like"/>
    <property type="match status" value="1"/>
</dbReference>
<dbReference type="SUPFAM" id="SSF53850">
    <property type="entry name" value="Periplasmic binding protein-like II"/>
    <property type="match status" value="1"/>
</dbReference>
<dbReference type="PROSITE" id="PS51257">
    <property type="entry name" value="PROKAR_LIPOPROTEIN"/>
    <property type="match status" value="1"/>
</dbReference>
<dbReference type="PROSITE" id="PS00922">
    <property type="entry name" value="TRANSGLYCOSYLASE"/>
    <property type="match status" value="1"/>
</dbReference>